<sequence length="106" mass="12061">MFCKHLSFVAITICFLLVLAKTENEIQQKNIKFDQRTWRNMRSNGYLALPRQGRSDNQPDYTCCGMPLTKYVGICPIGMECCPGLKKVLQKSGQRTIYSVCVADAY</sequence>
<gene>
    <name evidence="4" type="primary">SCPRP</name>
</gene>
<comment type="function">
    <text evidence="3">Evokes contractions in the radula protractor muscle, and may regulate feeding behavior and gut motility by controlling muscle contraction of the buccal mass.</text>
</comment>
<comment type="subcellular location">
    <subcellularLocation>
        <location evidence="1">Secreted</location>
    </subcellularLocation>
</comment>
<comment type="tissue specificity">
    <text evidence="3">Expression is seen in the peripheral and central nervous systems in tissues such as the brain, the inferior buccal ganglion, the gastric ganglion, the olfactory lobe, the peduncle lobe and the optic lobe. Expression in the brain is distributed in the median inferior frontal lobe, the superior buccal lobe, the prebranchial lobe and the pedal lobe. Not expressed in the vasomotor lobe or the palliovisceral lobe that controls the cardiac system.</text>
</comment>
<comment type="mass spectrometry" mass="1117.6" method="MALDI" evidence="3"/>
<comment type="similarity">
    <text evidence="3 5">Belongs to the SCP family.</text>
</comment>
<reference evidence="5 6" key="1">
    <citation type="journal article" date="2006" name="Peptides">
        <title>Isolation and characterization of a novel small cardioactive peptide-related peptide from the brain of Octopus vulgaris.</title>
        <authorList>
            <person name="Kanda A."/>
            <person name="Minakata H."/>
        </authorList>
    </citation>
    <scope>NUCLEOTIDE SEQUENCE [MRNA]</scope>
    <scope>PROTEIN SEQUENCE OF 43-52</scope>
    <scope>FUNCTION</scope>
    <scope>TISSUE SPECIFICITY</scope>
    <scope>AMIDATION AT GLN-52</scope>
    <scope>MASS SPECTROMETRY</scope>
    <source>
        <tissue evidence="3">Brain</tissue>
    </source>
</reference>
<dbReference type="EMBL" id="AB198190">
    <property type="protein sequence ID" value="BAE66649.1"/>
    <property type="molecule type" value="mRNA"/>
</dbReference>
<dbReference type="Proteomes" id="UP000515154">
    <property type="component" value="Unplaced"/>
</dbReference>
<dbReference type="GO" id="GO:0005576">
    <property type="term" value="C:extracellular region"/>
    <property type="evidence" value="ECO:0007669"/>
    <property type="project" value="UniProtKB-SubCell"/>
</dbReference>
<dbReference type="GO" id="GO:0007218">
    <property type="term" value="P:neuropeptide signaling pathway"/>
    <property type="evidence" value="ECO:0007669"/>
    <property type="project" value="UniProtKB-KW"/>
</dbReference>
<feature type="signal peptide" evidence="2">
    <location>
        <begin position="1"/>
        <end position="20"/>
    </location>
</feature>
<feature type="propeptide" id="PRO_0000395442" description="Amino-terminal spacer peptide" evidence="3">
    <location>
        <begin position="21"/>
        <end position="41"/>
    </location>
</feature>
<feature type="peptide" id="PRO_0000395443" description="Small cardioactive peptide-related peptide" evidence="3">
    <location>
        <begin position="43"/>
        <end position="52"/>
    </location>
</feature>
<feature type="propeptide" id="PRO_0000395444" description="Carboxy-terminal spacer peptide" evidence="3">
    <location>
        <begin position="55"/>
        <end position="106"/>
    </location>
</feature>
<feature type="modified residue" description="Glutamine amide" evidence="3">
    <location>
        <position position="52"/>
    </location>
</feature>
<protein>
    <recommendedName>
        <fullName evidence="6">Small cardioactive peptide-related peptide</fullName>
        <shortName evidence="4">oct-SCPRP</shortName>
    </recommendedName>
</protein>
<name>SCPRP_OCTVU</name>
<organism>
    <name type="scientific">Octopus vulgaris</name>
    <name type="common">Common octopus</name>
    <dbReference type="NCBI Taxonomy" id="6645"/>
    <lineage>
        <taxon>Eukaryota</taxon>
        <taxon>Metazoa</taxon>
        <taxon>Spiralia</taxon>
        <taxon>Lophotrochozoa</taxon>
        <taxon>Mollusca</taxon>
        <taxon>Cephalopoda</taxon>
        <taxon>Coleoidea</taxon>
        <taxon>Octopodiformes</taxon>
        <taxon>Octopoda</taxon>
        <taxon>Incirrata</taxon>
        <taxon>Octopodidae</taxon>
        <taxon>Octopus</taxon>
    </lineage>
</organism>
<accession>Q2V2G5</accession>
<evidence type="ECO:0000250" key="1">
    <source>
        <dbReference type="UniProtKB" id="P09892"/>
    </source>
</evidence>
<evidence type="ECO:0000255" key="2"/>
<evidence type="ECO:0000269" key="3">
    <source>
    </source>
</evidence>
<evidence type="ECO:0000303" key="4">
    <source>
    </source>
</evidence>
<evidence type="ECO:0000305" key="5"/>
<evidence type="ECO:0000312" key="6">
    <source>
        <dbReference type="EMBL" id="BAE66649.1"/>
    </source>
</evidence>
<keyword id="KW-0027">Amidation</keyword>
<keyword id="KW-0165">Cleavage on pair of basic residues</keyword>
<keyword id="KW-0903">Direct protein sequencing</keyword>
<keyword id="KW-0527">Neuropeptide</keyword>
<keyword id="KW-1185">Reference proteome</keyword>
<keyword id="KW-0964">Secreted</keyword>
<keyword id="KW-0732">Signal</keyword>
<proteinExistence type="evidence at protein level"/>